<sequence length="245" mass="26350">MTLTASSSSRAVTNSPVVVALDYHNRDDALAFVDKIDPRDCRLKVGKEMFTLFGPQFVRELQQRGFDIFLDLKFHDIPNTAAHAVAAAADLGVWMVNVHASGGARMMTAAREALVPFGKDAPLLIAVTVLTSMEASDLVDLGMTLSPADYAERLAALTQKCGLDGVVCSAQEAVRFKQVFGQEFKLVTPGIRPQGSEAGDQRRIMTPEQALSAGVDYMVIGRPVTQSVDPAQTLKAINASLQRSA</sequence>
<keyword id="KW-0210">Decarboxylase</keyword>
<keyword id="KW-0456">Lyase</keyword>
<keyword id="KW-0665">Pyrimidine biosynthesis</keyword>
<feature type="chain" id="PRO_1000138525" description="Orotidine 5'-phosphate decarboxylase">
    <location>
        <begin position="1"/>
        <end position="245"/>
    </location>
</feature>
<feature type="active site" description="Proton donor" evidence="1">
    <location>
        <position position="73"/>
    </location>
</feature>
<feature type="binding site" evidence="1">
    <location>
        <position position="22"/>
    </location>
    <ligand>
        <name>substrate</name>
    </ligand>
</feature>
<feature type="binding site" evidence="1">
    <location>
        <position position="44"/>
    </location>
    <ligand>
        <name>substrate</name>
    </ligand>
</feature>
<feature type="binding site" evidence="1">
    <location>
        <begin position="71"/>
        <end position="80"/>
    </location>
    <ligand>
        <name>substrate</name>
    </ligand>
</feature>
<feature type="binding site" evidence="1">
    <location>
        <position position="131"/>
    </location>
    <ligand>
        <name>substrate</name>
    </ligand>
</feature>
<feature type="binding site" evidence="1">
    <location>
        <position position="192"/>
    </location>
    <ligand>
        <name>substrate</name>
    </ligand>
</feature>
<feature type="binding site" evidence="1">
    <location>
        <position position="201"/>
    </location>
    <ligand>
        <name>substrate</name>
    </ligand>
</feature>
<feature type="binding site" evidence="1">
    <location>
        <position position="221"/>
    </location>
    <ligand>
        <name>substrate</name>
    </ligand>
</feature>
<feature type="binding site" evidence="1">
    <location>
        <position position="222"/>
    </location>
    <ligand>
        <name>substrate</name>
    </ligand>
</feature>
<dbReference type="EC" id="4.1.1.23" evidence="1"/>
<dbReference type="EMBL" id="CP000948">
    <property type="protein sequence ID" value="ACB02502.1"/>
    <property type="molecule type" value="Genomic_DNA"/>
</dbReference>
<dbReference type="RefSeq" id="WP_000176270.1">
    <property type="nucleotide sequence ID" value="NC_010473.1"/>
</dbReference>
<dbReference type="SMR" id="B1XBN2"/>
<dbReference type="KEGG" id="ecd:ECDH10B_1398"/>
<dbReference type="HOGENOM" id="CLU_067069_0_0_6"/>
<dbReference type="UniPathway" id="UPA00070">
    <property type="reaction ID" value="UER00120"/>
</dbReference>
<dbReference type="GO" id="GO:0005829">
    <property type="term" value="C:cytosol"/>
    <property type="evidence" value="ECO:0007669"/>
    <property type="project" value="TreeGrafter"/>
</dbReference>
<dbReference type="GO" id="GO:0004590">
    <property type="term" value="F:orotidine-5'-phosphate decarboxylase activity"/>
    <property type="evidence" value="ECO:0007669"/>
    <property type="project" value="UniProtKB-UniRule"/>
</dbReference>
<dbReference type="GO" id="GO:0006207">
    <property type="term" value="P:'de novo' pyrimidine nucleobase biosynthetic process"/>
    <property type="evidence" value="ECO:0007669"/>
    <property type="project" value="InterPro"/>
</dbReference>
<dbReference type="GO" id="GO:0044205">
    <property type="term" value="P:'de novo' UMP biosynthetic process"/>
    <property type="evidence" value="ECO:0007669"/>
    <property type="project" value="UniProtKB-UniRule"/>
</dbReference>
<dbReference type="CDD" id="cd04725">
    <property type="entry name" value="OMP_decarboxylase_like"/>
    <property type="match status" value="1"/>
</dbReference>
<dbReference type="FunFam" id="3.20.20.70:FF:000015">
    <property type="entry name" value="Orotidine 5'-phosphate decarboxylase"/>
    <property type="match status" value="1"/>
</dbReference>
<dbReference type="Gene3D" id="3.20.20.70">
    <property type="entry name" value="Aldolase class I"/>
    <property type="match status" value="1"/>
</dbReference>
<dbReference type="HAMAP" id="MF_01200_B">
    <property type="entry name" value="OMPdecase_type1_B"/>
    <property type="match status" value="1"/>
</dbReference>
<dbReference type="InterPro" id="IPR013785">
    <property type="entry name" value="Aldolase_TIM"/>
</dbReference>
<dbReference type="InterPro" id="IPR014732">
    <property type="entry name" value="OMPdecase"/>
</dbReference>
<dbReference type="InterPro" id="IPR018089">
    <property type="entry name" value="OMPdecase_AS"/>
</dbReference>
<dbReference type="InterPro" id="IPR047596">
    <property type="entry name" value="OMPdecase_bac"/>
</dbReference>
<dbReference type="InterPro" id="IPR001754">
    <property type="entry name" value="OMPdeCOase_dom"/>
</dbReference>
<dbReference type="InterPro" id="IPR011060">
    <property type="entry name" value="RibuloseP-bd_barrel"/>
</dbReference>
<dbReference type="NCBIfam" id="NF001273">
    <property type="entry name" value="PRK00230.1"/>
    <property type="match status" value="1"/>
</dbReference>
<dbReference type="NCBIfam" id="TIGR01740">
    <property type="entry name" value="pyrF"/>
    <property type="match status" value="1"/>
</dbReference>
<dbReference type="PANTHER" id="PTHR32119">
    <property type="entry name" value="OROTIDINE 5'-PHOSPHATE DECARBOXYLASE"/>
    <property type="match status" value="1"/>
</dbReference>
<dbReference type="PANTHER" id="PTHR32119:SF2">
    <property type="entry name" value="OROTIDINE 5'-PHOSPHATE DECARBOXYLASE"/>
    <property type="match status" value="1"/>
</dbReference>
<dbReference type="Pfam" id="PF00215">
    <property type="entry name" value="OMPdecase"/>
    <property type="match status" value="1"/>
</dbReference>
<dbReference type="SMART" id="SM00934">
    <property type="entry name" value="OMPdecase"/>
    <property type="match status" value="1"/>
</dbReference>
<dbReference type="SUPFAM" id="SSF51366">
    <property type="entry name" value="Ribulose-phoshate binding barrel"/>
    <property type="match status" value="1"/>
</dbReference>
<dbReference type="PROSITE" id="PS00156">
    <property type="entry name" value="OMPDECASE"/>
    <property type="match status" value="1"/>
</dbReference>
<accession>B1XBN2</accession>
<organism>
    <name type="scientific">Escherichia coli (strain K12 / DH10B)</name>
    <dbReference type="NCBI Taxonomy" id="316385"/>
    <lineage>
        <taxon>Bacteria</taxon>
        <taxon>Pseudomonadati</taxon>
        <taxon>Pseudomonadota</taxon>
        <taxon>Gammaproteobacteria</taxon>
        <taxon>Enterobacterales</taxon>
        <taxon>Enterobacteriaceae</taxon>
        <taxon>Escherichia</taxon>
    </lineage>
</organism>
<proteinExistence type="inferred from homology"/>
<gene>
    <name evidence="1" type="primary">pyrF</name>
    <name type="ordered locus">ECDH10B_1398</name>
</gene>
<evidence type="ECO:0000255" key="1">
    <source>
        <dbReference type="HAMAP-Rule" id="MF_01200"/>
    </source>
</evidence>
<protein>
    <recommendedName>
        <fullName evidence="1">Orotidine 5'-phosphate decarboxylase</fullName>
        <ecNumber evidence="1">4.1.1.23</ecNumber>
    </recommendedName>
    <alternativeName>
        <fullName evidence="1">OMP decarboxylase</fullName>
        <shortName evidence="1">OMPDCase</shortName>
        <shortName evidence="1">OMPdecase</shortName>
    </alternativeName>
</protein>
<reference key="1">
    <citation type="journal article" date="2008" name="J. Bacteriol.">
        <title>The complete genome sequence of Escherichia coli DH10B: insights into the biology of a laboratory workhorse.</title>
        <authorList>
            <person name="Durfee T."/>
            <person name="Nelson R."/>
            <person name="Baldwin S."/>
            <person name="Plunkett G. III"/>
            <person name="Burland V."/>
            <person name="Mau B."/>
            <person name="Petrosino J.F."/>
            <person name="Qin X."/>
            <person name="Muzny D.M."/>
            <person name="Ayele M."/>
            <person name="Gibbs R.A."/>
            <person name="Csorgo B."/>
            <person name="Posfai G."/>
            <person name="Weinstock G.M."/>
            <person name="Blattner F.R."/>
        </authorList>
    </citation>
    <scope>NUCLEOTIDE SEQUENCE [LARGE SCALE GENOMIC DNA]</scope>
    <source>
        <strain>K12 / DH10B</strain>
    </source>
</reference>
<comment type="function">
    <text evidence="1">Catalyzes the decarboxylation of orotidine 5'-monophosphate (OMP) to uridine 5'-monophosphate (UMP).</text>
</comment>
<comment type="catalytic activity">
    <reaction evidence="1">
        <text>orotidine 5'-phosphate + H(+) = UMP + CO2</text>
        <dbReference type="Rhea" id="RHEA:11596"/>
        <dbReference type="ChEBI" id="CHEBI:15378"/>
        <dbReference type="ChEBI" id="CHEBI:16526"/>
        <dbReference type="ChEBI" id="CHEBI:57538"/>
        <dbReference type="ChEBI" id="CHEBI:57865"/>
        <dbReference type="EC" id="4.1.1.23"/>
    </reaction>
</comment>
<comment type="pathway">
    <text evidence="1">Pyrimidine metabolism; UMP biosynthesis via de novo pathway; UMP from orotate: step 2/2.</text>
</comment>
<comment type="subunit">
    <text evidence="1">Homodimer.</text>
</comment>
<comment type="similarity">
    <text evidence="1">Belongs to the OMP decarboxylase family. Type 1 subfamily.</text>
</comment>
<name>PYRF_ECODH</name>